<dbReference type="PIR" id="JQ0442">
    <property type="entry name" value="IJXLC1"/>
</dbReference>
<dbReference type="SMR" id="P20310"/>
<dbReference type="GlyCosmos" id="P20310">
    <property type="glycosylation" value="8 sites, No reported glycans"/>
</dbReference>
<dbReference type="Proteomes" id="UP000186698">
    <property type="component" value="Unplaced"/>
</dbReference>
<dbReference type="GO" id="GO:0005912">
    <property type="term" value="C:adherens junction"/>
    <property type="evidence" value="ECO:0000250"/>
    <property type="project" value="UniProtKB"/>
</dbReference>
<dbReference type="GO" id="GO:0045177">
    <property type="term" value="C:apical part of cell"/>
    <property type="evidence" value="ECO:0000318"/>
    <property type="project" value="GO_Central"/>
</dbReference>
<dbReference type="GO" id="GO:0016342">
    <property type="term" value="C:catenin complex"/>
    <property type="evidence" value="ECO:0000318"/>
    <property type="project" value="GO_Central"/>
</dbReference>
<dbReference type="GO" id="GO:0009986">
    <property type="term" value="C:cell surface"/>
    <property type="evidence" value="ECO:0007669"/>
    <property type="project" value="UniProtKB-SubCell"/>
</dbReference>
<dbReference type="GO" id="GO:0005911">
    <property type="term" value="C:cell-cell junction"/>
    <property type="evidence" value="ECO:0000250"/>
    <property type="project" value="UniProtKB"/>
</dbReference>
<dbReference type="GO" id="GO:0005737">
    <property type="term" value="C:cytoplasm"/>
    <property type="evidence" value="ECO:0000318"/>
    <property type="project" value="GO_Central"/>
</dbReference>
<dbReference type="GO" id="GO:0030057">
    <property type="term" value="C:desmosome"/>
    <property type="evidence" value="ECO:0000250"/>
    <property type="project" value="UniProtKB"/>
</dbReference>
<dbReference type="GO" id="GO:0014704">
    <property type="term" value="C:intercalated disc"/>
    <property type="evidence" value="ECO:0000250"/>
    <property type="project" value="UniProtKB"/>
</dbReference>
<dbReference type="GO" id="GO:0030027">
    <property type="term" value="C:lamellipodium"/>
    <property type="evidence" value="ECO:0000318"/>
    <property type="project" value="GO_Central"/>
</dbReference>
<dbReference type="GO" id="GO:0043005">
    <property type="term" value="C:neuron projection"/>
    <property type="evidence" value="ECO:0000318"/>
    <property type="project" value="GO_Central"/>
</dbReference>
<dbReference type="GO" id="GO:0005886">
    <property type="term" value="C:plasma membrane"/>
    <property type="evidence" value="ECO:0000250"/>
    <property type="project" value="UniProtKB"/>
</dbReference>
<dbReference type="GO" id="GO:0014069">
    <property type="term" value="C:postsynaptic density"/>
    <property type="evidence" value="ECO:0007669"/>
    <property type="project" value="TreeGrafter"/>
</dbReference>
<dbReference type="GO" id="GO:0099634">
    <property type="term" value="C:postsynaptic specialization membrane"/>
    <property type="evidence" value="ECO:0007669"/>
    <property type="project" value="TreeGrafter"/>
</dbReference>
<dbReference type="GO" id="GO:0048787">
    <property type="term" value="C:presynaptic active zone membrane"/>
    <property type="evidence" value="ECO:0007669"/>
    <property type="project" value="TreeGrafter"/>
</dbReference>
<dbReference type="GO" id="GO:0042383">
    <property type="term" value="C:sarcolemma"/>
    <property type="evidence" value="ECO:0007669"/>
    <property type="project" value="UniProtKB-SubCell"/>
</dbReference>
<dbReference type="GO" id="GO:0008013">
    <property type="term" value="F:beta-catenin binding"/>
    <property type="evidence" value="ECO:0000318"/>
    <property type="project" value="GO_Central"/>
</dbReference>
<dbReference type="GO" id="GO:0045296">
    <property type="term" value="F:cadherin binding"/>
    <property type="evidence" value="ECO:0000318"/>
    <property type="project" value="GO_Central"/>
</dbReference>
<dbReference type="GO" id="GO:0005509">
    <property type="term" value="F:calcium ion binding"/>
    <property type="evidence" value="ECO:0000250"/>
    <property type="project" value="UniProtKB"/>
</dbReference>
<dbReference type="GO" id="GO:0034332">
    <property type="term" value="P:adherens junction organization"/>
    <property type="evidence" value="ECO:0000318"/>
    <property type="project" value="GO_Central"/>
</dbReference>
<dbReference type="GO" id="GO:0016339">
    <property type="term" value="P:calcium-dependent cell-cell adhesion via plasma membrane cell adhesion molecules"/>
    <property type="evidence" value="ECO:0000318"/>
    <property type="project" value="GO_Central"/>
</dbReference>
<dbReference type="GO" id="GO:0016477">
    <property type="term" value="P:cell migration"/>
    <property type="evidence" value="ECO:0000318"/>
    <property type="project" value="GO_Central"/>
</dbReference>
<dbReference type="GO" id="GO:0000902">
    <property type="term" value="P:cell morphogenesis"/>
    <property type="evidence" value="ECO:0000318"/>
    <property type="project" value="GO_Central"/>
</dbReference>
<dbReference type="GO" id="GO:0098609">
    <property type="term" value="P:cell-cell adhesion"/>
    <property type="evidence" value="ECO:0000250"/>
    <property type="project" value="UniProtKB"/>
</dbReference>
<dbReference type="GO" id="GO:0044331">
    <property type="term" value="P:cell-cell adhesion mediated by cadherin"/>
    <property type="evidence" value="ECO:0000250"/>
    <property type="project" value="UniProtKB"/>
</dbReference>
<dbReference type="GO" id="GO:0007043">
    <property type="term" value="P:cell-cell junction assembly"/>
    <property type="evidence" value="ECO:0000318"/>
    <property type="project" value="GO_Central"/>
</dbReference>
<dbReference type="GO" id="GO:0010001">
    <property type="term" value="P:glial cell differentiation"/>
    <property type="evidence" value="ECO:0000250"/>
    <property type="project" value="UniProtKB"/>
</dbReference>
<dbReference type="GO" id="GO:0007156">
    <property type="term" value="P:homophilic cell adhesion via plasma membrane adhesion molecules"/>
    <property type="evidence" value="ECO:0007669"/>
    <property type="project" value="InterPro"/>
</dbReference>
<dbReference type="GO" id="GO:0097150">
    <property type="term" value="P:neuronal stem cell population maintenance"/>
    <property type="evidence" value="ECO:0000250"/>
    <property type="project" value="UniProtKB"/>
</dbReference>
<dbReference type="GO" id="GO:0007416">
    <property type="term" value="P:synapse assembly"/>
    <property type="evidence" value="ECO:0000318"/>
    <property type="project" value="GO_Central"/>
</dbReference>
<dbReference type="CDD" id="cd11304">
    <property type="entry name" value="Cadherin_repeat"/>
    <property type="match status" value="4"/>
</dbReference>
<dbReference type="FunFam" id="2.60.40.60:FF:000011">
    <property type="entry name" value="Cadherin 1"/>
    <property type="match status" value="1"/>
</dbReference>
<dbReference type="FunFam" id="2.60.40.60:FF:000019">
    <property type="entry name" value="Cadherin 2"/>
    <property type="match status" value="1"/>
</dbReference>
<dbReference type="FunFam" id="2.60.40.60:FF:000022">
    <property type="entry name" value="Cadherin 2"/>
    <property type="match status" value="1"/>
</dbReference>
<dbReference type="FunFam" id="2.60.40.60:FF:000027">
    <property type="entry name" value="Cadherin 2"/>
    <property type="match status" value="1"/>
</dbReference>
<dbReference type="FunFam" id="2.60.40.60:FF:000045">
    <property type="entry name" value="Cadherin 2"/>
    <property type="match status" value="1"/>
</dbReference>
<dbReference type="FunFam" id="2.60.40.60:FF:000462">
    <property type="entry name" value="Cadherin 2"/>
    <property type="match status" value="1"/>
</dbReference>
<dbReference type="FunFam" id="4.10.900.10:FF:000001">
    <property type="entry name" value="Cadherin 2"/>
    <property type="match status" value="1"/>
</dbReference>
<dbReference type="Gene3D" id="2.60.40.60">
    <property type="entry name" value="Cadherins"/>
    <property type="match status" value="6"/>
</dbReference>
<dbReference type="Gene3D" id="4.10.900.10">
    <property type="entry name" value="TCF3-CBD (Catenin binding domain)"/>
    <property type="match status" value="1"/>
</dbReference>
<dbReference type="InterPro" id="IPR039808">
    <property type="entry name" value="Cadherin"/>
</dbReference>
<dbReference type="InterPro" id="IPR002126">
    <property type="entry name" value="Cadherin-like_dom"/>
</dbReference>
<dbReference type="InterPro" id="IPR015919">
    <property type="entry name" value="Cadherin-like_sf"/>
</dbReference>
<dbReference type="InterPro" id="IPR020894">
    <property type="entry name" value="Cadherin_CS"/>
</dbReference>
<dbReference type="InterPro" id="IPR014868">
    <property type="entry name" value="Cadherin_pro_dom"/>
</dbReference>
<dbReference type="InterPro" id="IPR000233">
    <property type="entry name" value="Cadherin_Y-type_LIR"/>
</dbReference>
<dbReference type="InterPro" id="IPR027397">
    <property type="entry name" value="Catenin-bd_sf"/>
</dbReference>
<dbReference type="PANTHER" id="PTHR24027:SF79">
    <property type="entry name" value="CADHERIN-2"/>
    <property type="match status" value="1"/>
</dbReference>
<dbReference type="PANTHER" id="PTHR24027">
    <property type="entry name" value="CADHERIN-23"/>
    <property type="match status" value="1"/>
</dbReference>
<dbReference type="Pfam" id="PF01049">
    <property type="entry name" value="CADH_Y-type_LIR"/>
    <property type="match status" value="1"/>
</dbReference>
<dbReference type="Pfam" id="PF00028">
    <property type="entry name" value="Cadherin"/>
    <property type="match status" value="5"/>
</dbReference>
<dbReference type="Pfam" id="PF08758">
    <property type="entry name" value="Cadherin_pro"/>
    <property type="match status" value="1"/>
</dbReference>
<dbReference type="PRINTS" id="PR00205">
    <property type="entry name" value="CADHERIN"/>
</dbReference>
<dbReference type="SMART" id="SM00112">
    <property type="entry name" value="CA"/>
    <property type="match status" value="5"/>
</dbReference>
<dbReference type="SMART" id="SM01055">
    <property type="entry name" value="Cadherin_pro"/>
    <property type="match status" value="1"/>
</dbReference>
<dbReference type="SUPFAM" id="SSF49313">
    <property type="entry name" value="Cadherin-like"/>
    <property type="match status" value="6"/>
</dbReference>
<dbReference type="PROSITE" id="PS00232">
    <property type="entry name" value="CADHERIN_1"/>
    <property type="match status" value="3"/>
</dbReference>
<dbReference type="PROSITE" id="PS50268">
    <property type="entry name" value="CADHERIN_2"/>
    <property type="match status" value="5"/>
</dbReference>
<sequence length="905" mass="100549">MCRKQPFLLPTLLGILAALMLQQGPVEAFGGSRLCKTGFLEDVYHASVYRSVHEGQPLLNVMFTDCGTDRRIQYETSNPTDFRIDGDGIVFASRTFDISPEQAEFLVYAQDEDTRELWHVTVKITLRPPHEHHSHQGFHKVREIKFSTQRNSNGLQRQKRDWVIPPINVPENARGTFPQELVRIRSDRDKNLSLRYSVTGPGADQPPIGVFIINPIGGQLSVTKPLDREQIANFHLRAHAVDVNGNQVENPIDIVINVIDMNDNRPEFLHQIWNGSIPEGSKPGTYVMTVTAIDGDDPKQPNGMLRYKILSQTPAISSPNMFTINNETGDIITLAAGLDREKVQRYTLIIQATDMEGNPTYGLSNTATAVIAVTDVNDNPPEFTAMTFYGEVPENRVDVVVANLTVTDKDQPHTPAWNAVYRIVGGDGTGRFAIKTDANSNDGLVTVVKPIDYETKSTYILTVVAENQVDLIRGIQFKPESTATVSVTVIDVNENPYFTPNPKLIRQEEGLFASKMLTTFSAQDPDRYMQQTIRYSKLSDPANWLKIDPVNGLITTTAVLDRESMYVKNNMYNATFLATDSGIPPMSGTGTLQIYLLDINDNAPYVYPQEVEICERPDPNAINITALDADINPNSGPFIFELPYSPMDIKNWTVTRLSGDHAQLSLKIGSLDYGIYNIPIHITDSGNPAMSNTSYLRVKVCSCEHEYCSTTAPIIGTGLGTGAIIAILLCIIILLTLVLMFVVWMKRRDKERQAKQLLIDPEDDVRDNILKYDEEGGGEEDQDYDLSQLQQPDTMEPDTIKPVGIRRMDERPIHAEPQYPIRSAAPHPGDIGDFINEGLKAADNDPTAPPYDSLLVFDYEGSGSTAGSLSSLNSSSSGGEQDYDYLNDWGPRFKKLADMYGGSDD</sequence>
<proteinExistence type="evidence at transcript level"/>
<keyword id="KW-0106">Calcium</keyword>
<keyword id="KW-0130">Cell adhesion</keyword>
<keyword id="KW-0965">Cell junction</keyword>
<keyword id="KW-1003">Cell membrane</keyword>
<keyword id="KW-0165">Cleavage on pair of basic residues</keyword>
<keyword id="KW-0325">Glycoprotein</keyword>
<keyword id="KW-0472">Membrane</keyword>
<keyword id="KW-0479">Metal-binding</keyword>
<keyword id="KW-1185">Reference proteome</keyword>
<keyword id="KW-0677">Repeat</keyword>
<keyword id="KW-0732">Signal</keyword>
<keyword id="KW-0812">Transmembrane</keyword>
<keyword id="KW-1133">Transmembrane helix</keyword>
<protein>
    <recommendedName>
        <fullName>Cadherin-2B</fullName>
    </recommendedName>
    <alternativeName>
        <fullName>Neural cadherin B</fullName>
        <shortName>N-cadherin B</shortName>
    </alternativeName>
    <alternativeName>
        <fullName>Neural cadherin-1</fullName>
        <shortName>N-cadherin-1</shortName>
    </alternativeName>
</protein>
<comment type="function">
    <text evidence="1 6">Calcium-dependent cell adhesion protein; preferentially mediates homotypic cell-cell adhesion. Cadherins may thus contribute to the sorting of heterogeneous cell types, and thereby play an important role during embryonic development. Required for proper neurite branching. Required for pre- and postsynaptic organization (By similarity).</text>
</comment>
<comment type="subunit">
    <text evidence="2">Homodimer (via extracellular region). Can also form heterodimers with other cadherins (via extracellular region). Dimerization occurs in trans, i.e. with a cadherin chain from another cell.</text>
</comment>
<comment type="subcellular location">
    <subcellularLocation>
        <location evidence="2">Cell membrane</location>
        <topology evidence="3">Single-pass type I membrane protein</topology>
    </subcellularLocation>
    <subcellularLocation>
        <location evidence="2">Cell membrane</location>
        <location evidence="2">Sarcolemma</location>
    </subcellularLocation>
    <subcellularLocation>
        <location evidence="2">Cell junction</location>
    </subcellularLocation>
    <subcellularLocation>
        <location evidence="2">Cell surface</location>
    </subcellularLocation>
    <subcellularLocation>
        <location evidence="2">Cell junction</location>
        <location evidence="2">Desmosome</location>
    </subcellularLocation>
    <subcellularLocation>
        <location evidence="2">Cell junction</location>
        <location evidence="2">Adherens junction</location>
    </subcellularLocation>
</comment>
<comment type="domain">
    <text evidence="2">Three calcium ions are usually bound at the interface of each cadherin domain and rigidify the connections, imparting a strong curvature to the full-length ectodomain. Calcium-binding sites are occupied sequentially in the order of site 3, then site 2 and site 1.</text>
</comment>
<name>CAD2B_XENLA</name>
<reference key="1">
    <citation type="journal article" date="1990" name="Neuron">
        <title>The effects of N-cadherin misexpression on morphogenesis in Xenopus embryos.</title>
        <authorList>
            <person name="Detrick R.J."/>
            <person name="Dickey D."/>
            <person name="Kintner C.R."/>
        </authorList>
    </citation>
    <scope>NUCLEOTIDE SEQUENCE [MRNA]</scope>
    <scope>FUNCTION</scope>
</reference>
<evidence type="ECO:0000250" key="1">
    <source>
        <dbReference type="UniProtKB" id="P10288"/>
    </source>
</evidence>
<evidence type="ECO:0000250" key="2">
    <source>
        <dbReference type="UniProtKB" id="P15116"/>
    </source>
</evidence>
<evidence type="ECO:0000255" key="3"/>
<evidence type="ECO:0000255" key="4">
    <source>
        <dbReference type="PROSITE-ProRule" id="PRU00043"/>
    </source>
</evidence>
<evidence type="ECO:0000256" key="5">
    <source>
        <dbReference type="SAM" id="MobiDB-lite"/>
    </source>
</evidence>
<evidence type="ECO:0000305" key="6">
    <source>
    </source>
</evidence>
<accession>P20310</accession>
<organism>
    <name type="scientific">Xenopus laevis</name>
    <name type="common">African clawed frog</name>
    <dbReference type="NCBI Taxonomy" id="8355"/>
    <lineage>
        <taxon>Eukaryota</taxon>
        <taxon>Metazoa</taxon>
        <taxon>Chordata</taxon>
        <taxon>Craniata</taxon>
        <taxon>Vertebrata</taxon>
        <taxon>Euteleostomi</taxon>
        <taxon>Amphibia</taxon>
        <taxon>Batrachia</taxon>
        <taxon>Anura</taxon>
        <taxon>Pipoidea</taxon>
        <taxon>Pipidae</taxon>
        <taxon>Xenopodinae</taxon>
        <taxon>Xenopus</taxon>
        <taxon>Xenopus</taxon>
    </lineage>
</organism>
<feature type="signal peptide" evidence="3">
    <location>
        <begin position="1"/>
        <end position="28"/>
    </location>
</feature>
<feature type="propeptide" id="PRO_0000003741" evidence="3">
    <location>
        <begin position="29"/>
        <end position="160"/>
    </location>
</feature>
<feature type="chain" id="PRO_0000003742" description="Cadherin-2B">
    <location>
        <begin position="161"/>
        <end position="905"/>
    </location>
</feature>
<feature type="topological domain" description="Extracellular" evidence="3">
    <location>
        <begin position="161"/>
        <end position="723"/>
    </location>
</feature>
<feature type="transmembrane region" description="Helical" evidence="3">
    <location>
        <begin position="724"/>
        <end position="745"/>
    </location>
</feature>
<feature type="topological domain" description="Cytoplasmic" evidence="3">
    <location>
        <begin position="746"/>
        <end position="905"/>
    </location>
</feature>
<feature type="domain" description="Cadherin 1" evidence="4">
    <location>
        <begin position="161"/>
        <end position="268"/>
    </location>
</feature>
<feature type="domain" description="Cadherin 2" evidence="4">
    <location>
        <begin position="269"/>
        <end position="383"/>
    </location>
</feature>
<feature type="domain" description="Cadherin 3" evidence="4">
    <location>
        <begin position="384"/>
        <end position="498"/>
    </location>
</feature>
<feature type="domain" description="Cadherin 4" evidence="4">
    <location>
        <begin position="499"/>
        <end position="604"/>
    </location>
</feature>
<feature type="domain" description="Cadherin 5" evidence="4">
    <location>
        <begin position="605"/>
        <end position="713"/>
    </location>
</feature>
<feature type="region of interest" description="Disordered" evidence="5">
    <location>
        <begin position="774"/>
        <end position="800"/>
    </location>
</feature>
<feature type="region of interest" description="Disordered" evidence="5">
    <location>
        <begin position="862"/>
        <end position="883"/>
    </location>
</feature>
<feature type="compositionally biased region" description="Acidic residues" evidence="5">
    <location>
        <begin position="775"/>
        <end position="784"/>
    </location>
</feature>
<feature type="compositionally biased region" description="Low complexity" evidence="5">
    <location>
        <begin position="862"/>
        <end position="879"/>
    </location>
</feature>
<feature type="binding site" evidence="2">
    <location>
        <position position="171"/>
    </location>
    <ligand>
        <name>Ca(2+)</name>
        <dbReference type="ChEBI" id="CHEBI:29108"/>
        <label>1</label>
    </ligand>
</feature>
<feature type="binding site" evidence="2">
    <location>
        <position position="171"/>
    </location>
    <ligand>
        <name>Ca(2+)</name>
        <dbReference type="ChEBI" id="CHEBI:29108"/>
        <label>2</label>
    </ligand>
</feature>
<feature type="binding site" evidence="2">
    <location>
        <position position="227"/>
    </location>
    <ligand>
        <name>Ca(2+)</name>
        <dbReference type="ChEBI" id="CHEBI:29108"/>
        <label>1</label>
    </ligand>
</feature>
<feature type="binding site" evidence="2">
    <location>
        <position position="229"/>
    </location>
    <ligand>
        <name>Ca(2+)</name>
        <dbReference type="ChEBI" id="CHEBI:29108"/>
        <label>1</label>
    </ligand>
</feature>
<feature type="binding site" evidence="2">
    <location>
        <position position="229"/>
    </location>
    <ligand>
        <name>Ca(2+)</name>
        <dbReference type="ChEBI" id="CHEBI:29108"/>
        <label>2</label>
    </ligand>
</feature>
<feature type="binding site" evidence="2">
    <location>
        <position position="260"/>
    </location>
    <ligand>
        <name>Ca(2+)</name>
        <dbReference type="ChEBI" id="CHEBI:29108"/>
        <label>2</label>
    </ligand>
</feature>
<feature type="binding site" evidence="2">
    <location>
        <position position="261"/>
    </location>
    <ligand>
        <name>Ca(2+)</name>
        <dbReference type="ChEBI" id="CHEBI:29108"/>
        <label>2</label>
    </ligand>
</feature>
<feature type="binding site" evidence="2">
    <location>
        <position position="262"/>
    </location>
    <ligand>
        <name>Ca(2+)</name>
        <dbReference type="ChEBI" id="CHEBI:29108"/>
        <label>3</label>
    </ligand>
</feature>
<feature type="binding site" evidence="2">
    <location>
        <position position="263"/>
    </location>
    <ligand>
        <name>Ca(2+)</name>
        <dbReference type="ChEBI" id="CHEBI:29108"/>
        <label>1</label>
    </ligand>
</feature>
<feature type="binding site" evidence="2">
    <location>
        <position position="263"/>
    </location>
    <ligand>
        <name>Ca(2+)</name>
        <dbReference type="ChEBI" id="CHEBI:29108"/>
        <label>2</label>
    </ligand>
</feature>
<feature type="binding site" evidence="2">
    <location>
        <position position="264"/>
    </location>
    <ligand>
        <name>Ca(2+)</name>
        <dbReference type="ChEBI" id="CHEBI:29108"/>
        <label>3</label>
    </ligand>
</feature>
<feature type="binding site" evidence="2">
    <location>
        <position position="294"/>
    </location>
    <ligand>
        <name>Ca(2+)</name>
        <dbReference type="ChEBI" id="CHEBI:29108"/>
        <label>3</label>
    </ligand>
</feature>
<feature type="binding site" evidence="2">
    <location>
        <position position="296"/>
    </location>
    <ligand>
        <name>Ca(2+)</name>
        <dbReference type="ChEBI" id="CHEBI:29108"/>
        <label>2</label>
    </ligand>
</feature>
<feature type="binding site" evidence="2">
    <location>
        <position position="302"/>
    </location>
    <ligand>
        <name>Ca(2+)</name>
        <dbReference type="ChEBI" id="CHEBI:29108"/>
        <label>3</label>
    </ligand>
</feature>
<feature type="binding site" evidence="2">
    <location>
        <position position="354"/>
    </location>
    <ligand>
        <name>Ca(2+)</name>
        <dbReference type="ChEBI" id="CHEBI:29108"/>
        <label>3</label>
    </ligand>
</feature>
<feature type="glycosylation site" description="N-linked (GlcNAc...) asparagine" evidence="3">
    <location>
        <position position="191"/>
    </location>
</feature>
<feature type="glycosylation site" description="N-linked (GlcNAc...) asparagine" evidence="3">
    <location>
        <position position="274"/>
    </location>
</feature>
<feature type="glycosylation site" description="N-linked (GlcNAc...) asparagine" evidence="3">
    <location>
        <position position="326"/>
    </location>
</feature>
<feature type="glycosylation site" description="N-linked (GlcNAc...) asparagine" evidence="3">
    <location>
        <position position="403"/>
    </location>
</feature>
<feature type="glycosylation site" description="N-linked (GlcNAc...) asparagine" evidence="3">
    <location>
        <position position="573"/>
    </location>
</feature>
<feature type="glycosylation site" description="N-linked (GlcNAc...) asparagine" evidence="3">
    <location>
        <position position="623"/>
    </location>
</feature>
<feature type="glycosylation site" description="N-linked (GlcNAc...) asparagine" evidence="3">
    <location>
        <position position="651"/>
    </location>
</feature>
<feature type="glycosylation site" description="N-linked (GlcNAc...) asparagine" evidence="3">
    <location>
        <position position="692"/>
    </location>
</feature>
<gene>
    <name type="primary">cdh2-b</name>
</gene>